<organism>
    <name type="scientific">Mycoplasmoides gallisepticum (strain R(low / passage 15 / clone 2))</name>
    <name type="common">Mycoplasma gallisepticum</name>
    <dbReference type="NCBI Taxonomy" id="710127"/>
    <lineage>
        <taxon>Bacteria</taxon>
        <taxon>Bacillati</taxon>
        <taxon>Mycoplasmatota</taxon>
        <taxon>Mycoplasmoidales</taxon>
        <taxon>Mycoplasmoidaceae</taxon>
        <taxon>Mycoplasmoides</taxon>
    </lineage>
</organism>
<sequence length="37" mass="4390">MKVRSSVKPICKDCKVIRRQRVVRVICKTPKHKQRQG</sequence>
<name>RL36_MYCGA</name>
<dbReference type="EMBL" id="L35043">
    <property type="protein sequence ID" value="AAF19042.1"/>
    <property type="molecule type" value="Genomic_DNA"/>
</dbReference>
<dbReference type="EMBL" id="AE015450">
    <property type="protein sequence ID" value="AAP56981.1"/>
    <property type="molecule type" value="Genomic_DNA"/>
</dbReference>
<dbReference type="SMR" id="Q9RDV9"/>
<dbReference type="KEGG" id="mga:MGA_1320d"/>
<dbReference type="HOGENOM" id="CLU_135723_6_2_14"/>
<dbReference type="Proteomes" id="UP000001418">
    <property type="component" value="Chromosome"/>
</dbReference>
<dbReference type="GO" id="GO:0005737">
    <property type="term" value="C:cytoplasm"/>
    <property type="evidence" value="ECO:0007669"/>
    <property type="project" value="UniProtKB-ARBA"/>
</dbReference>
<dbReference type="GO" id="GO:1990904">
    <property type="term" value="C:ribonucleoprotein complex"/>
    <property type="evidence" value="ECO:0007669"/>
    <property type="project" value="UniProtKB-KW"/>
</dbReference>
<dbReference type="GO" id="GO:0005840">
    <property type="term" value="C:ribosome"/>
    <property type="evidence" value="ECO:0007669"/>
    <property type="project" value="UniProtKB-KW"/>
</dbReference>
<dbReference type="GO" id="GO:0003735">
    <property type="term" value="F:structural constituent of ribosome"/>
    <property type="evidence" value="ECO:0007669"/>
    <property type="project" value="InterPro"/>
</dbReference>
<dbReference type="GO" id="GO:0006412">
    <property type="term" value="P:translation"/>
    <property type="evidence" value="ECO:0007669"/>
    <property type="project" value="UniProtKB-UniRule"/>
</dbReference>
<dbReference type="HAMAP" id="MF_00251">
    <property type="entry name" value="Ribosomal_bL36"/>
    <property type="match status" value="1"/>
</dbReference>
<dbReference type="InterPro" id="IPR000473">
    <property type="entry name" value="Ribosomal_bL36"/>
</dbReference>
<dbReference type="InterPro" id="IPR035977">
    <property type="entry name" value="Ribosomal_bL36_sp"/>
</dbReference>
<dbReference type="NCBIfam" id="TIGR01022">
    <property type="entry name" value="rpmJ_bact"/>
    <property type="match status" value="1"/>
</dbReference>
<dbReference type="PANTHER" id="PTHR42888">
    <property type="entry name" value="50S RIBOSOMAL PROTEIN L36, CHLOROPLASTIC"/>
    <property type="match status" value="1"/>
</dbReference>
<dbReference type="PANTHER" id="PTHR42888:SF1">
    <property type="entry name" value="LARGE RIBOSOMAL SUBUNIT PROTEIN BL36C"/>
    <property type="match status" value="1"/>
</dbReference>
<dbReference type="Pfam" id="PF00444">
    <property type="entry name" value="Ribosomal_L36"/>
    <property type="match status" value="1"/>
</dbReference>
<dbReference type="SUPFAM" id="SSF57840">
    <property type="entry name" value="Ribosomal protein L36"/>
    <property type="match status" value="1"/>
</dbReference>
<dbReference type="PROSITE" id="PS00828">
    <property type="entry name" value="RIBOSOMAL_L36"/>
    <property type="match status" value="1"/>
</dbReference>
<comment type="similarity">
    <text evidence="1">Belongs to the bacterial ribosomal protein bL36 family.</text>
</comment>
<feature type="chain" id="PRO_0000126213" description="Large ribosomal subunit protein bL36">
    <location>
        <begin position="1"/>
        <end position="37"/>
    </location>
</feature>
<feature type="sequence conflict" description="In Ref. 1; AAF19042." evidence="1" ref="1">
    <original>R</original>
    <variation>I</variation>
    <location>
        <position position="18"/>
    </location>
</feature>
<accession>Q9RDV9</accession>
<gene>
    <name type="primary">rpmJ</name>
    <name type="synonym">rpl36</name>
    <name type="ordered locus">MYCGA6310</name>
    <name type="ORF">MGA_1320d</name>
</gene>
<protein>
    <recommendedName>
        <fullName evidence="1">Large ribosomal subunit protein bL36</fullName>
    </recommendedName>
    <alternativeName>
        <fullName>50S ribosomal protein L36</fullName>
    </alternativeName>
</protein>
<evidence type="ECO:0000305" key="1"/>
<proteinExistence type="inferred from homology"/>
<reference key="1">
    <citation type="journal article" date="2002" name="FEMS Microbiol. Lett.">
        <title>Mycoplasma gallisepticum rpoA gene cluster.</title>
        <authorList>
            <person name="Skamrov A.V."/>
            <person name="Feoktistova E.S."/>
            <person name="Gol'dman M.A."/>
            <person name="Bibilashvili R.S."/>
        </authorList>
    </citation>
    <scope>NUCLEOTIDE SEQUENCE [GENOMIC DNA]</scope>
    <source>
        <strain>A5969Var.B</strain>
    </source>
</reference>
<reference key="2">
    <citation type="journal article" date="2003" name="Microbiology">
        <title>The complete genome sequence of the avian pathogen Mycoplasma gallisepticum strain R(low).</title>
        <authorList>
            <person name="Papazisi L."/>
            <person name="Gorton T.S."/>
            <person name="Kutish G."/>
            <person name="Markham P.F."/>
            <person name="Browning G.F."/>
            <person name="Nguyen D.K."/>
            <person name="Swartzell S."/>
            <person name="Madan A."/>
            <person name="Mahairas G."/>
            <person name="Geary S.J."/>
        </authorList>
    </citation>
    <scope>NUCLEOTIDE SEQUENCE [LARGE SCALE GENOMIC DNA]</scope>
    <source>
        <strain>R(low / passage 15 / clone 2)</strain>
    </source>
</reference>
<keyword id="KW-1185">Reference proteome</keyword>
<keyword id="KW-0687">Ribonucleoprotein</keyword>
<keyword id="KW-0689">Ribosomal protein</keyword>